<dbReference type="EMBL" id="AJ239043">
    <property type="protein sequence ID" value="CAB90994.1"/>
    <property type="molecule type" value="Genomic_DNA"/>
</dbReference>
<dbReference type="EMBL" id="BA000003">
    <property type="protein sequence ID" value="BAB13093.1"/>
    <property type="molecule type" value="Genomic_DNA"/>
</dbReference>
<dbReference type="RefSeq" id="NP_240207.1">
    <property type="nucleotide sequence ID" value="NC_002528.1"/>
</dbReference>
<dbReference type="RefSeq" id="WP_009874347.1">
    <property type="nucleotide sequence ID" value="NC_002528.1"/>
</dbReference>
<dbReference type="SMR" id="P57470"/>
<dbReference type="STRING" id="563178.BUAP5A_383"/>
<dbReference type="EnsemblBacteria" id="BAB13093">
    <property type="protein sequence ID" value="BAB13093"/>
    <property type="gene ID" value="BAB13093"/>
</dbReference>
<dbReference type="KEGG" id="buc:BU390"/>
<dbReference type="PATRIC" id="fig|107806.10.peg.404"/>
<dbReference type="eggNOG" id="COG0103">
    <property type="taxonomic scope" value="Bacteria"/>
</dbReference>
<dbReference type="HOGENOM" id="CLU_046483_2_1_6"/>
<dbReference type="Proteomes" id="UP000001806">
    <property type="component" value="Chromosome"/>
</dbReference>
<dbReference type="GO" id="GO:0022627">
    <property type="term" value="C:cytosolic small ribosomal subunit"/>
    <property type="evidence" value="ECO:0007669"/>
    <property type="project" value="TreeGrafter"/>
</dbReference>
<dbReference type="GO" id="GO:0003723">
    <property type="term" value="F:RNA binding"/>
    <property type="evidence" value="ECO:0007669"/>
    <property type="project" value="TreeGrafter"/>
</dbReference>
<dbReference type="GO" id="GO:0003735">
    <property type="term" value="F:structural constituent of ribosome"/>
    <property type="evidence" value="ECO:0007669"/>
    <property type="project" value="InterPro"/>
</dbReference>
<dbReference type="GO" id="GO:0006412">
    <property type="term" value="P:translation"/>
    <property type="evidence" value="ECO:0007669"/>
    <property type="project" value="UniProtKB-UniRule"/>
</dbReference>
<dbReference type="FunFam" id="3.30.230.10:FF:000001">
    <property type="entry name" value="30S ribosomal protein S9"/>
    <property type="match status" value="1"/>
</dbReference>
<dbReference type="Gene3D" id="3.30.230.10">
    <property type="match status" value="1"/>
</dbReference>
<dbReference type="HAMAP" id="MF_00532_B">
    <property type="entry name" value="Ribosomal_uS9_B"/>
    <property type="match status" value="1"/>
</dbReference>
<dbReference type="InterPro" id="IPR020568">
    <property type="entry name" value="Ribosomal_Su5_D2-typ_SF"/>
</dbReference>
<dbReference type="InterPro" id="IPR000754">
    <property type="entry name" value="Ribosomal_uS9"/>
</dbReference>
<dbReference type="InterPro" id="IPR023035">
    <property type="entry name" value="Ribosomal_uS9_bac/plastid"/>
</dbReference>
<dbReference type="InterPro" id="IPR020574">
    <property type="entry name" value="Ribosomal_uS9_CS"/>
</dbReference>
<dbReference type="InterPro" id="IPR014721">
    <property type="entry name" value="Ribsml_uS5_D2-typ_fold_subgr"/>
</dbReference>
<dbReference type="NCBIfam" id="NF001099">
    <property type="entry name" value="PRK00132.1"/>
    <property type="match status" value="1"/>
</dbReference>
<dbReference type="PANTHER" id="PTHR21569">
    <property type="entry name" value="RIBOSOMAL PROTEIN S9"/>
    <property type="match status" value="1"/>
</dbReference>
<dbReference type="PANTHER" id="PTHR21569:SF1">
    <property type="entry name" value="SMALL RIBOSOMAL SUBUNIT PROTEIN US9M"/>
    <property type="match status" value="1"/>
</dbReference>
<dbReference type="Pfam" id="PF00380">
    <property type="entry name" value="Ribosomal_S9"/>
    <property type="match status" value="1"/>
</dbReference>
<dbReference type="SUPFAM" id="SSF54211">
    <property type="entry name" value="Ribosomal protein S5 domain 2-like"/>
    <property type="match status" value="1"/>
</dbReference>
<dbReference type="PROSITE" id="PS00360">
    <property type="entry name" value="RIBOSOMAL_S9"/>
    <property type="match status" value="1"/>
</dbReference>
<accession>P57470</accession>
<accession>Q9L4J4</accession>
<gene>
    <name type="primary">rpsI</name>
    <name type="ordered locus">BU390</name>
</gene>
<comment type="similarity">
    <text evidence="1">Belongs to the universal ribosomal protein uS9 family.</text>
</comment>
<name>RS9_BUCAI</name>
<proteinExistence type="inferred from homology"/>
<feature type="chain" id="PRO_0000111335" description="Small ribosomal subunit protein uS9">
    <location>
        <begin position="1"/>
        <end position="130"/>
    </location>
</feature>
<feature type="sequence conflict" description="In Ref. 1; CAB90994." evidence="1" ref="1">
    <original>V</original>
    <variation>I</variation>
    <location>
        <position position="104"/>
    </location>
</feature>
<reference key="1">
    <citation type="journal article" date="2000" name="J. Bacteriol.">
        <title>Prephenate dehydratase from the aphid endosymbiont (Buchnera) displays changes in the regulatory domain that suggest its desensitization to inhibition by phenylalanine.</title>
        <authorList>
            <person name="Jimenez N."/>
            <person name="Gonzalez-Candelas F."/>
            <person name="Silva F.J."/>
        </authorList>
    </citation>
    <scope>NUCLEOTIDE SEQUENCE [GENOMIC DNA]</scope>
</reference>
<reference key="2">
    <citation type="journal article" date="2000" name="Nature">
        <title>Genome sequence of the endocellular bacterial symbiont of aphids Buchnera sp. APS.</title>
        <authorList>
            <person name="Shigenobu S."/>
            <person name="Watanabe H."/>
            <person name="Hattori M."/>
            <person name="Sakaki Y."/>
            <person name="Ishikawa H."/>
        </authorList>
    </citation>
    <scope>NUCLEOTIDE SEQUENCE [LARGE SCALE GENOMIC DNA]</scope>
    <source>
        <strain>APS</strain>
    </source>
</reference>
<keyword id="KW-1185">Reference proteome</keyword>
<keyword id="KW-0687">Ribonucleoprotein</keyword>
<keyword id="KW-0689">Ribosomal protein</keyword>
<protein>
    <recommendedName>
        <fullName evidence="1">Small ribosomal subunit protein uS9</fullName>
    </recommendedName>
    <alternativeName>
        <fullName>30S ribosomal protein S9</fullName>
    </alternativeName>
</protein>
<evidence type="ECO:0000305" key="1"/>
<sequence>MIQTQNYGTGRRKSSSARVFLRSGNGEIVVNKRSLNEYFGRETSCMIVRQPLELVDMVDKFNIYITVKGGGISGQAGAIRQGITRALIKYNQTLRFELRKAGFVTRDSRQVERKKVGFRKARKRPQFSKR</sequence>
<organism>
    <name type="scientific">Buchnera aphidicola subsp. Acyrthosiphon pisum (strain APS)</name>
    <name type="common">Acyrthosiphon pisum symbiotic bacterium</name>
    <dbReference type="NCBI Taxonomy" id="107806"/>
    <lineage>
        <taxon>Bacteria</taxon>
        <taxon>Pseudomonadati</taxon>
        <taxon>Pseudomonadota</taxon>
        <taxon>Gammaproteobacteria</taxon>
        <taxon>Enterobacterales</taxon>
        <taxon>Erwiniaceae</taxon>
        <taxon>Buchnera</taxon>
    </lineage>
</organism>